<reference key="1">
    <citation type="journal article" date="2009" name="PLoS Genet.">
        <title>Alliance of proteomics and genomics to unravel the specificities of Sahara bacterium Deinococcus deserti.</title>
        <authorList>
            <person name="de Groot A."/>
            <person name="Dulermo R."/>
            <person name="Ortet P."/>
            <person name="Blanchard L."/>
            <person name="Guerin P."/>
            <person name="Fernandez B."/>
            <person name="Vacherie B."/>
            <person name="Dossat C."/>
            <person name="Jolivet E."/>
            <person name="Siguier P."/>
            <person name="Chandler M."/>
            <person name="Barakat M."/>
            <person name="Dedieu A."/>
            <person name="Barbe V."/>
            <person name="Heulin T."/>
            <person name="Sommer S."/>
            <person name="Achouak W."/>
            <person name="Armengaud J."/>
        </authorList>
    </citation>
    <scope>NUCLEOTIDE SEQUENCE [LARGE SCALE GENOMIC DNA]</scope>
    <source>
        <strain>DSM 17065 / CIP 109153 / LMG 22923 / VCD115</strain>
    </source>
</reference>
<proteinExistence type="inferred from homology"/>
<feature type="chain" id="PRO_1000205511" description="DNA-directed RNA polymerase subunit omega">
    <location>
        <begin position="1"/>
        <end position="99"/>
    </location>
</feature>
<comment type="function">
    <text evidence="1">Promotes RNA polymerase assembly. Latches the N- and C-terminal regions of the beta' subunit thereby facilitating its interaction with the beta and alpha subunits.</text>
</comment>
<comment type="catalytic activity">
    <reaction evidence="1">
        <text>RNA(n) + a ribonucleoside 5'-triphosphate = RNA(n+1) + diphosphate</text>
        <dbReference type="Rhea" id="RHEA:21248"/>
        <dbReference type="Rhea" id="RHEA-COMP:14527"/>
        <dbReference type="Rhea" id="RHEA-COMP:17342"/>
        <dbReference type="ChEBI" id="CHEBI:33019"/>
        <dbReference type="ChEBI" id="CHEBI:61557"/>
        <dbReference type="ChEBI" id="CHEBI:140395"/>
        <dbReference type="EC" id="2.7.7.6"/>
    </reaction>
</comment>
<comment type="subunit">
    <text evidence="1">The RNAP catalytic core consists of 2 alpha, 1 beta, 1 beta' and 1 omega subunit. When a sigma factor is associated with the core the holoenzyme is formed, which can initiate transcription.</text>
</comment>
<comment type="similarity">
    <text evidence="1">Belongs to the RNA polymerase subunit omega family.</text>
</comment>
<name>RPOZ_DEIDV</name>
<sequence>MAEKDIDKLLSMTDSKYRLSVVTAKRALQLRSGAPSVLPVEQRVRTRNLVTQAMRELATGKLTVGTSLLDEQRFHQDYVRQRQAQIQAQLNAERERERD</sequence>
<protein>
    <recommendedName>
        <fullName evidence="1">DNA-directed RNA polymerase subunit omega</fullName>
        <shortName evidence="1">RNAP omega subunit</shortName>
        <ecNumber evidence="1">2.7.7.6</ecNumber>
    </recommendedName>
    <alternativeName>
        <fullName evidence="1">RNA polymerase omega subunit</fullName>
    </alternativeName>
    <alternativeName>
        <fullName evidence="1">Transcriptase subunit omega</fullName>
    </alternativeName>
</protein>
<organism>
    <name type="scientific">Deinococcus deserti (strain DSM 17065 / CIP 109153 / LMG 22923 / VCD115)</name>
    <dbReference type="NCBI Taxonomy" id="546414"/>
    <lineage>
        <taxon>Bacteria</taxon>
        <taxon>Thermotogati</taxon>
        <taxon>Deinococcota</taxon>
        <taxon>Deinococci</taxon>
        <taxon>Deinococcales</taxon>
        <taxon>Deinococcaceae</taxon>
        <taxon>Deinococcus</taxon>
    </lineage>
</organism>
<evidence type="ECO:0000255" key="1">
    <source>
        <dbReference type="HAMAP-Rule" id="MF_00366"/>
    </source>
</evidence>
<keyword id="KW-0240">DNA-directed RNA polymerase</keyword>
<keyword id="KW-0548">Nucleotidyltransferase</keyword>
<keyword id="KW-1185">Reference proteome</keyword>
<keyword id="KW-0804">Transcription</keyword>
<keyword id="KW-0808">Transferase</keyword>
<gene>
    <name evidence="1" type="primary">rpoZ</name>
    <name type="ordered locus">Deide_02580</name>
</gene>
<accession>C1CZ29</accession>
<dbReference type="EC" id="2.7.7.6" evidence="1"/>
<dbReference type="EMBL" id="CP001114">
    <property type="protein sequence ID" value="ACO45067.1"/>
    <property type="molecule type" value="Genomic_DNA"/>
</dbReference>
<dbReference type="RefSeq" id="WP_012692190.1">
    <property type="nucleotide sequence ID" value="NC_012526.1"/>
</dbReference>
<dbReference type="SMR" id="C1CZ29"/>
<dbReference type="STRING" id="546414.Deide_02580"/>
<dbReference type="PaxDb" id="546414-Deide_02580"/>
<dbReference type="KEGG" id="ddr:Deide_02580"/>
<dbReference type="eggNOG" id="COG1758">
    <property type="taxonomic scope" value="Bacteria"/>
</dbReference>
<dbReference type="HOGENOM" id="CLU_2286878_0_0_0"/>
<dbReference type="OrthoDB" id="9796300at2"/>
<dbReference type="Proteomes" id="UP000002208">
    <property type="component" value="Chromosome"/>
</dbReference>
<dbReference type="GO" id="GO:0000428">
    <property type="term" value="C:DNA-directed RNA polymerase complex"/>
    <property type="evidence" value="ECO:0007669"/>
    <property type="project" value="UniProtKB-KW"/>
</dbReference>
<dbReference type="GO" id="GO:0003677">
    <property type="term" value="F:DNA binding"/>
    <property type="evidence" value="ECO:0007669"/>
    <property type="project" value="UniProtKB-UniRule"/>
</dbReference>
<dbReference type="GO" id="GO:0003899">
    <property type="term" value="F:DNA-directed RNA polymerase activity"/>
    <property type="evidence" value="ECO:0007669"/>
    <property type="project" value="UniProtKB-UniRule"/>
</dbReference>
<dbReference type="GO" id="GO:0006351">
    <property type="term" value="P:DNA-templated transcription"/>
    <property type="evidence" value="ECO:0007669"/>
    <property type="project" value="UniProtKB-UniRule"/>
</dbReference>
<dbReference type="Gene3D" id="3.90.940.10">
    <property type="match status" value="1"/>
</dbReference>
<dbReference type="HAMAP" id="MF_00366">
    <property type="entry name" value="RNApol_bact_RpoZ"/>
    <property type="match status" value="1"/>
</dbReference>
<dbReference type="InterPro" id="IPR003716">
    <property type="entry name" value="DNA-dir_RNA_pol_omega"/>
</dbReference>
<dbReference type="InterPro" id="IPR006110">
    <property type="entry name" value="Pol_omega/Rpo6/RPB6"/>
</dbReference>
<dbReference type="InterPro" id="IPR036161">
    <property type="entry name" value="RPB6/omega-like_sf"/>
</dbReference>
<dbReference type="NCBIfam" id="TIGR00690">
    <property type="entry name" value="rpoZ"/>
    <property type="match status" value="1"/>
</dbReference>
<dbReference type="PANTHER" id="PTHR34476">
    <property type="entry name" value="DNA-DIRECTED RNA POLYMERASE SUBUNIT OMEGA"/>
    <property type="match status" value="1"/>
</dbReference>
<dbReference type="PANTHER" id="PTHR34476:SF1">
    <property type="entry name" value="DNA-DIRECTED RNA POLYMERASE SUBUNIT OMEGA"/>
    <property type="match status" value="1"/>
</dbReference>
<dbReference type="Pfam" id="PF01192">
    <property type="entry name" value="RNA_pol_Rpb6"/>
    <property type="match status" value="1"/>
</dbReference>
<dbReference type="SMART" id="SM01409">
    <property type="entry name" value="RNA_pol_Rpb6"/>
    <property type="match status" value="1"/>
</dbReference>
<dbReference type="SUPFAM" id="SSF63562">
    <property type="entry name" value="RPB6/omega subunit-like"/>
    <property type="match status" value="1"/>
</dbReference>